<proteinExistence type="inferred from homology"/>
<organism>
    <name type="scientific">Drosophila pseudoobscura pseudoobscura</name>
    <name type="common">Fruit fly</name>
    <dbReference type="NCBI Taxonomy" id="46245"/>
    <lineage>
        <taxon>Eukaryota</taxon>
        <taxon>Metazoa</taxon>
        <taxon>Ecdysozoa</taxon>
        <taxon>Arthropoda</taxon>
        <taxon>Hexapoda</taxon>
        <taxon>Insecta</taxon>
        <taxon>Pterygota</taxon>
        <taxon>Neoptera</taxon>
        <taxon>Endopterygota</taxon>
        <taxon>Diptera</taxon>
        <taxon>Brachycera</taxon>
        <taxon>Muscomorpha</taxon>
        <taxon>Ephydroidea</taxon>
        <taxon>Drosophilidae</taxon>
        <taxon>Drosophila</taxon>
        <taxon>Sophophora</taxon>
    </lineage>
</organism>
<gene>
    <name type="primary">Aats-cys</name>
    <name type="ORF">GA21073</name>
</gene>
<evidence type="ECO:0000250" key="1"/>
<evidence type="ECO:0000305" key="2"/>
<keyword id="KW-0030">Aminoacyl-tRNA synthetase</keyword>
<keyword id="KW-0067">ATP-binding</keyword>
<keyword id="KW-0963">Cytoplasm</keyword>
<keyword id="KW-0436">Ligase</keyword>
<keyword id="KW-0479">Metal-binding</keyword>
<keyword id="KW-0547">Nucleotide-binding</keyword>
<keyword id="KW-0597">Phosphoprotein</keyword>
<keyword id="KW-0648">Protein biosynthesis</keyword>
<keyword id="KW-1185">Reference proteome</keyword>
<keyword id="KW-0862">Zinc</keyword>
<accession>Q291L4</accession>
<dbReference type="EC" id="6.1.1.16"/>
<dbReference type="EMBL" id="CM000071">
    <property type="protein sequence ID" value="EAL25098.1"/>
    <property type="molecule type" value="Genomic_DNA"/>
</dbReference>
<dbReference type="RefSeq" id="XP_001360523.1">
    <property type="nucleotide sequence ID" value="XM_001360486.3"/>
</dbReference>
<dbReference type="SMR" id="Q291L4"/>
<dbReference type="FunCoup" id="Q291L4">
    <property type="interactions" value="2506"/>
</dbReference>
<dbReference type="STRING" id="46245.Q291L4"/>
<dbReference type="EnsemblMetazoa" id="FBtr0278422">
    <property type="protein sequence ID" value="FBpp0276860"/>
    <property type="gene ID" value="FBgn0081061"/>
</dbReference>
<dbReference type="KEGG" id="dpo:4803874"/>
<dbReference type="CTD" id="36784"/>
<dbReference type="eggNOG" id="KOG2007">
    <property type="taxonomic scope" value="Eukaryota"/>
</dbReference>
<dbReference type="HOGENOM" id="CLU_013528_3_3_1"/>
<dbReference type="InParanoid" id="Q291L4"/>
<dbReference type="OMA" id="FHNDMKS"/>
<dbReference type="PhylomeDB" id="Q291L4"/>
<dbReference type="Proteomes" id="UP000001819">
    <property type="component" value="Chromosome 3"/>
</dbReference>
<dbReference type="Bgee" id="FBgn0081061">
    <property type="expression patterns" value="Expressed in female reproductive system and 3 other cell types or tissues"/>
</dbReference>
<dbReference type="GO" id="GO:0005737">
    <property type="term" value="C:cytoplasm"/>
    <property type="evidence" value="ECO:0000250"/>
    <property type="project" value="UniProtKB"/>
</dbReference>
<dbReference type="GO" id="GO:0005524">
    <property type="term" value="F:ATP binding"/>
    <property type="evidence" value="ECO:0007669"/>
    <property type="project" value="UniProtKB-KW"/>
</dbReference>
<dbReference type="GO" id="GO:0004817">
    <property type="term" value="F:cysteine-tRNA ligase activity"/>
    <property type="evidence" value="ECO:0000250"/>
    <property type="project" value="UniProtKB"/>
</dbReference>
<dbReference type="GO" id="GO:0046872">
    <property type="term" value="F:metal ion binding"/>
    <property type="evidence" value="ECO:0007669"/>
    <property type="project" value="UniProtKB-KW"/>
</dbReference>
<dbReference type="GO" id="GO:0000049">
    <property type="term" value="F:tRNA binding"/>
    <property type="evidence" value="ECO:0000250"/>
    <property type="project" value="UniProtKB"/>
</dbReference>
<dbReference type="GO" id="GO:0006423">
    <property type="term" value="P:cysteinyl-tRNA aminoacylation"/>
    <property type="evidence" value="ECO:0000250"/>
    <property type="project" value="UniProtKB"/>
</dbReference>
<dbReference type="CDD" id="cd00672">
    <property type="entry name" value="CysRS_core"/>
    <property type="match status" value="1"/>
</dbReference>
<dbReference type="FunFam" id="1.20.120.1910:FF:000005">
    <property type="entry name" value="Cysteine-tRNA ligase, putative"/>
    <property type="match status" value="1"/>
</dbReference>
<dbReference type="Gene3D" id="1.20.120.1910">
    <property type="entry name" value="Cysteine-tRNA ligase, C-terminal anti-codon recognition domain"/>
    <property type="match status" value="1"/>
</dbReference>
<dbReference type="Gene3D" id="3.40.50.620">
    <property type="entry name" value="HUPs"/>
    <property type="match status" value="1"/>
</dbReference>
<dbReference type="HAMAP" id="MF_00041">
    <property type="entry name" value="Cys_tRNA_synth"/>
    <property type="match status" value="1"/>
</dbReference>
<dbReference type="InterPro" id="IPR015803">
    <property type="entry name" value="Cys-tRNA-ligase"/>
</dbReference>
<dbReference type="InterPro" id="IPR024909">
    <property type="entry name" value="Cys-tRNA/MSH_ligase"/>
</dbReference>
<dbReference type="InterPro" id="IPR014729">
    <property type="entry name" value="Rossmann-like_a/b/a_fold"/>
</dbReference>
<dbReference type="InterPro" id="IPR032678">
    <property type="entry name" value="tRNA-synt_1_cat_dom"/>
</dbReference>
<dbReference type="InterPro" id="IPR009080">
    <property type="entry name" value="tRNAsynth_Ia_anticodon-bd"/>
</dbReference>
<dbReference type="NCBIfam" id="TIGR00435">
    <property type="entry name" value="cysS"/>
    <property type="match status" value="1"/>
</dbReference>
<dbReference type="PANTHER" id="PTHR10890:SF3">
    <property type="entry name" value="CYSTEINE--TRNA LIGASE, CYTOPLASMIC"/>
    <property type="match status" value="1"/>
</dbReference>
<dbReference type="PANTHER" id="PTHR10890">
    <property type="entry name" value="CYSTEINYL-TRNA SYNTHETASE"/>
    <property type="match status" value="1"/>
</dbReference>
<dbReference type="Pfam" id="PF01406">
    <property type="entry name" value="tRNA-synt_1e"/>
    <property type="match status" value="1"/>
</dbReference>
<dbReference type="PRINTS" id="PR00983">
    <property type="entry name" value="TRNASYNTHCYS"/>
</dbReference>
<dbReference type="SUPFAM" id="SSF47323">
    <property type="entry name" value="Anticodon-binding domain of a subclass of class I aminoacyl-tRNA synthetases"/>
    <property type="match status" value="1"/>
</dbReference>
<dbReference type="SUPFAM" id="SSF52374">
    <property type="entry name" value="Nucleotidylyl transferase"/>
    <property type="match status" value="1"/>
</dbReference>
<sequence>MSKRVQPAWQAPKPAERPKLRLYNSLTRQKEDFVPLDGNNVTWYSCGPTVYDASHMGHARSYISFDILRRILADYFGYNIHYVMNITDIDDKIIKRARQNHLFEEYAGESANLPLDQLLGHQKEVLVRFQETCAKNTDPDKKVMLDKTLQRMNDAVVALTTAVSQGDEKGIAEKRQHYLNEAKDPIAEWLDGKKGAEINDNAVFESLPRFWEDQFHNDMKSLNILPPDVLTRVSEYVPQIVAFIQKIIDNGLAYAANNSVYFDVNGFDRKEKHHYAKLVPEAYGDTKSLQEGEGDLSVAEDRLSEKRSANDFALWKASKAGEPWWDSPWGRGRPGWHIECSAMASDIFGSTFDIHTGGVDLKFPHHDNELAQSEAAFNESEWVKYFLHTGHLTIAGCKMSKSLKNFVTIQEALKKHSATQLRLAFLLHSWKDTLDYSENTMEMATQYEKFLNEFFLNVKDLTRHVLSEEPRRQFDAWTDVEAALQKKFSSSQVQVHAALCDNVDTRSALDAIRELVSASNVYIRDNKSRLNSLLLRNVATYITDLLHVFGAIAGPRGGIGFPVSGGAGPQAAGGDLETTVLPYVQTLAEFRNLVREQAKALKAFDILKLCDDLRDNILPNLGVRLEDKDGGKFAVKLVDRDSLLREREAKLAAEAEKAAEKERKKQAVAAAAAAKDAQRRVNPKQMFLGETEKYSAFDENGLPTLDKEGKEISKGQVKKLQKLQQQQEQRYKEYLASIKEA</sequence>
<protein>
    <recommendedName>
        <fullName>Cysteine--tRNA ligase, cytoplasmic</fullName>
        <ecNumber>6.1.1.16</ecNumber>
    </recommendedName>
    <alternativeName>
        <fullName>Cysteinyl-tRNA synthetase</fullName>
        <shortName>CysRS</shortName>
    </alternativeName>
</protein>
<name>SYCC_DROPS</name>
<reference key="1">
    <citation type="journal article" date="2005" name="Genome Res.">
        <title>Comparative genome sequencing of Drosophila pseudoobscura: chromosomal, gene, and cis-element evolution.</title>
        <authorList>
            <person name="Richards S."/>
            <person name="Liu Y."/>
            <person name="Bettencourt B.R."/>
            <person name="Hradecky P."/>
            <person name="Letovsky S."/>
            <person name="Nielsen R."/>
            <person name="Thornton K."/>
            <person name="Hubisz M.J."/>
            <person name="Chen R."/>
            <person name="Meisel R.P."/>
            <person name="Couronne O."/>
            <person name="Hua S."/>
            <person name="Smith M.A."/>
            <person name="Zhang P."/>
            <person name="Liu J."/>
            <person name="Bussemaker H.J."/>
            <person name="van Batenburg M.F."/>
            <person name="Howells S.L."/>
            <person name="Scherer S.E."/>
            <person name="Sodergren E."/>
            <person name="Matthews B.B."/>
            <person name="Crosby M.A."/>
            <person name="Schroeder A.J."/>
            <person name="Ortiz-Barrientos D."/>
            <person name="Rives C.M."/>
            <person name="Metzker M.L."/>
            <person name="Muzny D.M."/>
            <person name="Scott G."/>
            <person name="Steffen D."/>
            <person name="Wheeler D.A."/>
            <person name="Worley K.C."/>
            <person name="Havlak P."/>
            <person name="Durbin K.J."/>
            <person name="Egan A."/>
            <person name="Gill R."/>
            <person name="Hume J."/>
            <person name="Morgan M.B."/>
            <person name="Miner G."/>
            <person name="Hamilton C."/>
            <person name="Huang Y."/>
            <person name="Waldron L."/>
            <person name="Verduzco D."/>
            <person name="Clerc-Blankenburg K.P."/>
            <person name="Dubchak I."/>
            <person name="Noor M.A.F."/>
            <person name="Anderson W."/>
            <person name="White K.P."/>
            <person name="Clark A.G."/>
            <person name="Schaeffer S.W."/>
            <person name="Gelbart W.M."/>
            <person name="Weinstock G.M."/>
            <person name="Gibbs R.A."/>
        </authorList>
    </citation>
    <scope>NUCLEOTIDE SEQUENCE [LARGE SCALE GENOMIC DNA]</scope>
    <source>
        <strain>MV2-25 / Tucson 14011-0121.94</strain>
    </source>
</reference>
<feature type="chain" id="PRO_0000348219" description="Cysteine--tRNA ligase, cytoplasmic">
    <location>
        <begin position="1"/>
        <end position="741"/>
    </location>
</feature>
<feature type="short sequence motif" description="'HIGH' region" evidence="1">
    <location>
        <begin position="48"/>
        <end position="58"/>
    </location>
</feature>
<feature type="short sequence motif" description="'KMSKS' region" evidence="1">
    <location>
        <begin position="398"/>
        <end position="402"/>
    </location>
</feature>
<feature type="binding site" evidence="1">
    <location>
        <position position="46"/>
    </location>
    <ligand>
        <name>Zn(2+)</name>
        <dbReference type="ChEBI" id="CHEBI:29105"/>
    </ligand>
</feature>
<feature type="binding site" evidence="1">
    <location>
        <position position="340"/>
    </location>
    <ligand>
        <name>Zn(2+)</name>
        <dbReference type="ChEBI" id="CHEBI:29105"/>
    </ligand>
</feature>
<feature type="binding site" evidence="1">
    <location>
        <position position="365"/>
    </location>
    <ligand>
        <name>Zn(2+)</name>
        <dbReference type="ChEBI" id="CHEBI:29105"/>
    </ligand>
</feature>
<feature type="binding site" evidence="1">
    <location>
        <position position="369"/>
    </location>
    <ligand>
        <name>Zn(2+)</name>
        <dbReference type="ChEBI" id="CHEBI:29105"/>
    </ligand>
</feature>
<feature type="binding site" evidence="1">
    <location>
        <position position="401"/>
    </location>
    <ligand>
        <name>ATP</name>
        <dbReference type="ChEBI" id="CHEBI:30616"/>
    </ligand>
</feature>
<feature type="modified residue" description="Phosphoserine" evidence="1">
    <location>
        <position position="297"/>
    </location>
</feature>
<comment type="catalytic activity">
    <reaction>
        <text>tRNA(Cys) + L-cysteine + ATP = L-cysteinyl-tRNA(Cys) + AMP + diphosphate</text>
        <dbReference type="Rhea" id="RHEA:17773"/>
        <dbReference type="Rhea" id="RHEA-COMP:9661"/>
        <dbReference type="Rhea" id="RHEA-COMP:9679"/>
        <dbReference type="ChEBI" id="CHEBI:30616"/>
        <dbReference type="ChEBI" id="CHEBI:33019"/>
        <dbReference type="ChEBI" id="CHEBI:35235"/>
        <dbReference type="ChEBI" id="CHEBI:78442"/>
        <dbReference type="ChEBI" id="CHEBI:78517"/>
        <dbReference type="ChEBI" id="CHEBI:456215"/>
        <dbReference type="EC" id="6.1.1.16"/>
    </reaction>
</comment>
<comment type="cofactor">
    <cofactor evidence="1">
        <name>Zn(2+)</name>
        <dbReference type="ChEBI" id="CHEBI:29105"/>
    </cofactor>
    <text evidence="1">Binds 1 zinc ion per subunit.</text>
</comment>
<comment type="subcellular location">
    <subcellularLocation>
        <location evidence="1">Cytoplasm</location>
    </subcellularLocation>
</comment>
<comment type="similarity">
    <text evidence="2">Belongs to the class-I aminoacyl-tRNA synthetase family.</text>
</comment>